<gene>
    <name evidence="1" type="primary">accA</name>
    <name type="ordered locus">Nmul_A1810</name>
</gene>
<feature type="chain" id="PRO_1000062642" description="Acetyl-coenzyme A carboxylase carboxyl transferase subunit alpha">
    <location>
        <begin position="1"/>
        <end position="322"/>
    </location>
</feature>
<feature type="domain" description="CoA carboxyltransferase C-terminal" evidence="2">
    <location>
        <begin position="30"/>
        <end position="293"/>
    </location>
</feature>
<accession>Q2Y814</accession>
<sequence length="322" mass="35842">MKITFLDFEQPIAELEAKIEELRFAQDDSAVDISAEILRLQKKSQSLTNSIYGKLTPWQISQVARHPQRPYTLDYIQNLFTDFEELHGDRGFADDYAIIGGLARFDGQTVMVIGHQKGRDTKEKIHRNFGMPKPEGYRKALRLMRLAEKFAIPLFTFIDTPGAYPGIGAEERGQSEAIGHNLYVMAELKVPVICTVIGEGGSGGALAVAVGDAIQMLQYATYSVISPEGCASILWKSADKAPEAAEIMGITAHRLKTLGLIDKIIDEPSGGAHRDQPATMQAVKKALQDSLKLLQEYSIHMLLEKRFERLMGYGQFKEVKVR</sequence>
<reference key="1">
    <citation type="submission" date="2005-08" db="EMBL/GenBank/DDBJ databases">
        <title>Complete sequence of chromosome 1 of Nitrosospira multiformis ATCC 25196.</title>
        <authorList>
            <person name="Copeland A."/>
            <person name="Lucas S."/>
            <person name="Lapidus A."/>
            <person name="Barry K."/>
            <person name="Detter J.C."/>
            <person name="Glavina T."/>
            <person name="Hammon N."/>
            <person name="Israni S."/>
            <person name="Pitluck S."/>
            <person name="Chain P."/>
            <person name="Malfatti S."/>
            <person name="Shin M."/>
            <person name="Vergez L."/>
            <person name="Schmutz J."/>
            <person name="Larimer F."/>
            <person name="Land M."/>
            <person name="Hauser L."/>
            <person name="Kyrpides N."/>
            <person name="Lykidis A."/>
            <person name="Richardson P."/>
        </authorList>
    </citation>
    <scope>NUCLEOTIDE SEQUENCE [LARGE SCALE GENOMIC DNA]</scope>
    <source>
        <strain>ATCC 25196 / NCIMB 11849 / C 71</strain>
    </source>
</reference>
<name>ACCA_NITMU</name>
<protein>
    <recommendedName>
        <fullName evidence="1">Acetyl-coenzyme A carboxylase carboxyl transferase subunit alpha</fullName>
        <shortName evidence="1">ACCase subunit alpha</shortName>
        <shortName evidence="1">Acetyl-CoA carboxylase carboxyltransferase subunit alpha</shortName>
        <ecNumber evidence="1">2.1.3.15</ecNumber>
    </recommendedName>
</protein>
<dbReference type="EC" id="2.1.3.15" evidence="1"/>
<dbReference type="EMBL" id="CP000103">
    <property type="protein sequence ID" value="ABB75107.1"/>
    <property type="molecule type" value="Genomic_DNA"/>
</dbReference>
<dbReference type="RefSeq" id="WP_011381127.1">
    <property type="nucleotide sequence ID" value="NC_007614.1"/>
</dbReference>
<dbReference type="SMR" id="Q2Y814"/>
<dbReference type="STRING" id="323848.Nmul_A1810"/>
<dbReference type="KEGG" id="nmu:Nmul_A1810"/>
<dbReference type="eggNOG" id="COG0825">
    <property type="taxonomic scope" value="Bacteria"/>
</dbReference>
<dbReference type="HOGENOM" id="CLU_015486_0_2_4"/>
<dbReference type="OrthoDB" id="9808023at2"/>
<dbReference type="UniPathway" id="UPA00655">
    <property type="reaction ID" value="UER00711"/>
</dbReference>
<dbReference type="Proteomes" id="UP000002718">
    <property type="component" value="Chromosome"/>
</dbReference>
<dbReference type="GO" id="GO:0009317">
    <property type="term" value="C:acetyl-CoA carboxylase complex"/>
    <property type="evidence" value="ECO:0007669"/>
    <property type="project" value="InterPro"/>
</dbReference>
<dbReference type="GO" id="GO:0003989">
    <property type="term" value="F:acetyl-CoA carboxylase activity"/>
    <property type="evidence" value="ECO:0007669"/>
    <property type="project" value="InterPro"/>
</dbReference>
<dbReference type="GO" id="GO:0005524">
    <property type="term" value="F:ATP binding"/>
    <property type="evidence" value="ECO:0007669"/>
    <property type="project" value="UniProtKB-KW"/>
</dbReference>
<dbReference type="GO" id="GO:0016743">
    <property type="term" value="F:carboxyl- or carbamoyltransferase activity"/>
    <property type="evidence" value="ECO:0007669"/>
    <property type="project" value="UniProtKB-UniRule"/>
</dbReference>
<dbReference type="GO" id="GO:0006633">
    <property type="term" value="P:fatty acid biosynthetic process"/>
    <property type="evidence" value="ECO:0007669"/>
    <property type="project" value="UniProtKB-KW"/>
</dbReference>
<dbReference type="GO" id="GO:2001295">
    <property type="term" value="P:malonyl-CoA biosynthetic process"/>
    <property type="evidence" value="ECO:0007669"/>
    <property type="project" value="UniProtKB-UniRule"/>
</dbReference>
<dbReference type="Gene3D" id="3.90.226.10">
    <property type="entry name" value="2-enoyl-CoA Hydratase, Chain A, domain 1"/>
    <property type="match status" value="1"/>
</dbReference>
<dbReference type="HAMAP" id="MF_00823">
    <property type="entry name" value="AcetylCoA_CT_alpha"/>
    <property type="match status" value="1"/>
</dbReference>
<dbReference type="InterPro" id="IPR001095">
    <property type="entry name" value="Acetyl_CoA_COase_a_su"/>
</dbReference>
<dbReference type="InterPro" id="IPR029045">
    <property type="entry name" value="ClpP/crotonase-like_dom_sf"/>
</dbReference>
<dbReference type="InterPro" id="IPR011763">
    <property type="entry name" value="COA_CT_C"/>
</dbReference>
<dbReference type="NCBIfam" id="TIGR00513">
    <property type="entry name" value="accA"/>
    <property type="match status" value="1"/>
</dbReference>
<dbReference type="NCBIfam" id="NF041504">
    <property type="entry name" value="AccA_sub"/>
    <property type="match status" value="1"/>
</dbReference>
<dbReference type="NCBIfam" id="NF004344">
    <property type="entry name" value="PRK05724.1"/>
    <property type="match status" value="1"/>
</dbReference>
<dbReference type="PANTHER" id="PTHR42853">
    <property type="entry name" value="ACETYL-COENZYME A CARBOXYLASE CARBOXYL TRANSFERASE SUBUNIT ALPHA"/>
    <property type="match status" value="1"/>
</dbReference>
<dbReference type="PANTHER" id="PTHR42853:SF3">
    <property type="entry name" value="ACETYL-COENZYME A CARBOXYLASE CARBOXYL TRANSFERASE SUBUNIT ALPHA, CHLOROPLASTIC"/>
    <property type="match status" value="1"/>
</dbReference>
<dbReference type="Pfam" id="PF03255">
    <property type="entry name" value="ACCA"/>
    <property type="match status" value="1"/>
</dbReference>
<dbReference type="PRINTS" id="PR01069">
    <property type="entry name" value="ACCCTRFRASEA"/>
</dbReference>
<dbReference type="SUPFAM" id="SSF52096">
    <property type="entry name" value="ClpP/crotonase"/>
    <property type="match status" value="1"/>
</dbReference>
<dbReference type="PROSITE" id="PS50989">
    <property type="entry name" value="COA_CT_CTER"/>
    <property type="match status" value="1"/>
</dbReference>
<comment type="function">
    <text evidence="1">Component of the acetyl coenzyme A carboxylase (ACC) complex. First, biotin carboxylase catalyzes the carboxylation of biotin on its carrier protein (BCCP) and then the CO(2) group is transferred by the carboxyltransferase to acetyl-CoA to form malonyl-CoA.</text>
</comment>
<comment type="catalytic activity">
    <reaction evidence="1">
        <text>N(6)-carboxybiotinyl-L-lysyl-[protein] + acetyl-CoA = N(6)-biotinyl-L-lysyl-[protein] + malonyl-CoA</text>
        <dbReference type="Rhea" id="RHEA:54728"/>
        <dbReference type="Rhea" id="RHEA-COMP:10505"/>
        <dbReference type="Rhea" id="RHEA-COMP:10506"/>
        <dbReference type="ChEBI" id="CHEBI:57288"/>
        <dbReference type="ChEBI" id="CHEBI:57384"/>
        <dbReference type="ChEBI" id="CHEBI:83144"/>
        <dbReference type="ChEBI" id="CHEBI:83145"/>
        <dbReference type="EC" id="2.1.3.15"/>
    </reaction>
</comment>
<comment type="pathway">
    <text evidence="1">Lipid metabolism; malonyl-CoA biosynthesis; malonyl-CoA from acetyl-CoA: step 1/1.</text>
</comment>
<comment type="subunit">
    <text evidence="1">Acetyl-CoA carboxylase is a heterohexamer composed of biotin carboxyl carrier protein (AccB), biotin carboxylase (AccC) and two subunits each of ACCase subunit alpha (AccA) and ACCase subunit beta (AccD).</text>
</comment>
<comment type="subcellular location">
    <subcellularLocation>
        <location evidence="1">Cytoplasm</location>
    </subcellularLocation>
</comment>
<comment type="similarity">
    <text evidence="1">Belongs to the AccA family.</text>
</comment>
<evidence type="ECO:0000255" key="1">
    <source>
        <dbReference type="HAMAP-Rule" id="MF_00823"/>
    </source>
</evidence>
<evidence type="ECO:0000255" key="2">
    <source>
        <dbReference type="PROSITE-ProRule" id="PRU01137"/>
    </source>
</evidence>
<keyword id="KW-0067">ATP-binding</keyword>
<keyword id="KW-0963">Cytoplasm</keyword>
<keyword id="KW-0275">Fatty acid biosynthesis</keyword>
<keyword id="KW-0276">Fatty acid metabolism</keyword>
<keyword id="KW-0444">Lipid biosynthesis</keyword>
<keyword id="KW-0443">Lipid metabolism</keyword>
<keyword id="KW-0547">Nucleotide-binding</keyword>
<keyword id="KW-1185">Reference proteome</keyword>
<keyword id="KW-0808">Transferase</keyword>
<proteinExistence type="inferred from homology"/>
<organism>
    <name type="scientific">Nitrosospira multiformis (strain ATCC 25196 / NCIMB 11849 / C 71)</name>
    <dbReference type="NCBI Taxonomy" id="323848"/>
    <lineage>
        <taxon>Bacteria</taxon>
        <taxon>Pseudomonadati</taxon>
        <taxon>Pseudomonadota</taxon>
        <taxon>Betaproteobacteria</taxon>
        <taxon>Nitrosomonadales</taxon>
        <taxon>Nitrosomonadaceae</taxon>
        <taxon>Nitrosospira</taxon>
    </lineage>
</organism>